<proteinExistence type="inferred from homology"/>
<comment type="catalytic activity">
    <reaction evidence="1">
        <text>D-glyceraldehyde 3-phosphate + phosphate + NADP(+) = (2R)-3-phospho-glyceroyl phosphate + NADPH + H(+)</text>
        <dbReference type="Rhea" id="RHEA:10296"/>
        <dbReference type="ChEBI" id="CHEBI:15378"/>
        <dbReference type="ChEBI" id="CHEBI:43474"/>
        <dbReference type="ChEBI" id="CHEBI:57604"/>
        <dbReference type="ChEBI" id="CHEBI:57783"/>
        <dbReference type="ChEBI" id="CHEBI:58349"/>
        <dbReference type="ChEBI" id="CHEBI:59776"/>
        <dbReference type="EC" id="1.2.1.59"/>
    </reaction>
</comment>
<comment type="catalytic activity">
    <reaction evidence="1">
        <text>D-glyceraldehyde 3-phosphate + phosphate + NAD(+) = (2R)-3-phospho-glyceroyl phosphate + NADH + H(+)</text>
        <dbReference type="Rhea" id="RHEA:10300"/>
        <dbReference type="ChEBI" id="CHEBI:15378"/>
        <dbReference type="ChEBI" id="CHEBI:43474"/>
        <dbReference type="ChEBI" id="CHEBI:57540"/>
        <dbReference type="ChEBI" id="CHEBI:57604"/>
        <dbReference type="ChEBI" id="CHEBI:57945"/>
        <dbReference type="ChEBI" id="CHEBI:59776"/>
        <dbReference type="EC" id="1.2.1.59"/>
    </reaction>
</comment>
<comment type="pathway">
    <text evidence="1">Carbohydrate degradation; glycolysis; pyruvate from D-glyceraldehyde 3-phosphate: step 1/5.</text>
</comment>
<comment type="subunit">
    <text evidence="1">Homotetramer.</text>
</comment>
<comment type="subcellular location">
    <subcellularLocation>
        <location evidence="1">Cytoplasm</location>
    </subcellularLocation>
</comment>
<comment type="similarity">
    <text evidence="1">Belongs to the glyceraldehyde-3-phosphate dehydrogenase family.</text>
</comment>
<dbReference type="EC" id="1.2.1.59" evidence="1"/>
<dbReference type="EMBL" id="CP000678">
    <property type="protein sequence ID" value="ABQ87167.1"/>
    <property type="molecule type" value="Genomic_DNA"/>
</dbReference>
<dbReference type="RefSeq" id="WP_004032973.1">
    <property type="nucleotide sequence ID" value="NZ_CP117965.1"/>
</dbReference>
<dbReference type="SMR" id="A5ULT9"/>
<dbReference type="STRING" id="420247.Msm_0962"/>
<dbReference type="EnsemblBacteria" id="ABQ87167">
    <property type="protein sequence ID" value="ABQ87167"/>
    <property type="gene ID" value="Msm_0962"/>
</dbReference>
<dbReference type="KEGG" id="msi:Msm_0962"/>
<dbReference type="PATRIC" id="fig|420247.28.peg.959"/>
<dbReference type="eggNOG" id="arCOG00493">
    <property type="taxonomic scope" value="Archaea"/>
</dbReference>
<dbReference type="HOGENOM" id="CLU_069533_0_0_2"/>
<dbReference type="UniPathway" id="UPA00109">
    <property type="reaction ID" value="UER00184"/>
</dbReference>
<dbReference type="Proteomes" id="UP000001992">
    <property type="component" value="Chromosome"/>
</dbReference>
<dbReference type="GO" id="GO:0005737">
    <property type="term" value="C:cytoplasm"/>
    <property type="evidence" value="ECO:0007669"/>
    <property type="project" value="UniProtKB-SubCell"/>
</dbReference>
<dbReference type="GO" id="GO:0008839">
    <property type="term" value="F:4-hydroxy-tetrahydrodipicolinate reductase"/>
    <property type="evidence" value="ECO:0007669"/>
    <property type="project" value="InterPro"/>
</dbReference>
<dbReference type="GO" id="GO:0004365">
    <property type="term" value="F:glyceraldehyde-3-phosphate dehydrogenase (NAD+) (phosphorylating) activity"/>
    <property type="evidence" value="ECO:0007669"/>
    <property type="project" value="UniProtKB-UniRule"/>
</dbReference>
<dbReference type="GO" id="GO:0047100">
    <property type="term" value="F:glyceraldehyde-3-phosphate dehydrogenase (NADP+) (phosphorylating) activity"/>
    <property type="evidence" value="ECO:0007669"/>
    <property type="project" value="RHEA"/>
</dbReference>
<dbReference type="GO" id="GO:0051287">
    <property type="term" value="F:NAD binding"/>
    <property type="evidence" value="ECO:0007669"/>
    <property type="project" value="InterPro"/>
</dbReference>
<dbReference type="GO" id="GO:0050661">
    <property type="term" value="F:NADP binding"/>
    <property type="evidence" value="ECO:0007669"/>
    <property type="project" value="InterPro"/>
</dbReference>
<dbReference type="GO" id="GO:0006096">
    <property type="term" value="P:glycolytic process"/>
    <property type="evidence" value="ECO:0007669"/>
    <property type="project" value="UniProtKB-UniRule"/>
</dbReference>
<dbReference type="GO" id="GO:0009089">
    <property type="term" value="P:lysine biosynthetic process via diaminopimelate"/>
    <property type="evidence" value="ECO:0007669"/>
    <property type="project" value="InterPro"/>
</dbReference>
<dbReference type="CDD" id="cd18127">
    <property type="entry name" value="GAPDH_II_C"/>
    <property type="match status" value="1"/>
</dbReference>
<dbReference type="CDD" id="cd02278">
    <property type="entry name" value="GAPDH_II_N"/>
    <property type="match status" value="1"/>
</dbReference>
<dbReference type="Gene3D" id="3.30.360.10">
    <property type="entry name" value="Dihydrodipicolinate Reductase, domain 2"/>
    <property type="match status" value="1"/>
</dbReference>
<dbReference type="Gene3D" id="3.40.50.720">
    <property type="entry name" value="NAD(P)-binding Rossmann-like Domain"/>
    <property type="match status" value="1"/>
</dbReference>
<dbReference type="HAMAP" id="MF_00559">
    <property type="entry name" value="G3P_dehdrog_arch"/>
    <property type="match status" value="1"/>
</dbReference>
<dbReference type="InterPro" id="IPR000846">
    <property type="entry name" value="DapB_N"/>
</dbReference>
<dbReference type="InterPro" id="IPR020831">
    <property type="entry name" value="GlycerAld/Erythrose_P_DH"/>
</dbReference>
<dbReference type="InterPro" id="IPR020830">
    <property type="entry name" value="GlycerAld_3-P_DH_AS"/>
</dbReference>
<dbReference type="InterPro" id="IPR020829">
    <property type="entry name" value="GlycerAld_3-P_DH_cat"/>
</dbReference>
<dbReference type="InterPro" id="IPR020828">
    <property type="entry name" value="GlycerAld_3-P_DH_NAD(P)-bd"/>
</dbReference>
<dbReference type="InterPro" id="IPR006436">
    <property type="entry name" value="Glyceraldehyde-3-P_DH_2_arc"/>
</dbReference>
<dbReference type="InterPro" id="IPR036291">
    <property type="entry name" value="NAD(P)-bd_dom_sf"/>
</dbReference>
<dbReference type="NCBIfam" id="TIGR01546">
    <property type="entry name" value="GAPDH-II_archae"/>
    <property type="match status" value="1"/>
</dbReference>
<dbReference type="NCBIfam" id="NF003251">
    <property type="entry name" value="PRK04207.1"/>
    <property type="match status" value="1"/>
</dbReference>
<dbReference type="Pfam" id="PF01113">
    <property type="entry name" value="DapB_N"/>
    <property type="match status" value="1"/>
</dbReference>
<dbReference type="Pfam" id="PF02800">
    <property type="entry name" value="Gp_dh_C"/>
    <property type="match status" value="1"/>
</dbReference>
<dbReference type="PIRSF" id="PIRSF000149">
    <property type="entry name" value="GAP_DH"/>
    <property type="match status" value="1"/>
</dbReference>
<dbReference type="SMART" id="SM00846">
    <property type="entry name" value="Gp_dh_N"/>
    <property type="match status" value="1"/>
</dbReference>
<dbReference type="SUPFAM" id="SSF55347">
    <property type="entry name" value="Glyceraldehyde-3-phosphate dehydrogenase-like, C-terminal domain"/>
    <property type="match status" value="1"/>
</dbReference>
<dbReference type="SUPFAM" id="SSF51735">
    <property type="entry name" value="NAD(P)-binding Rossmann-fold domains"/>
    <property type="match status" value="1"/>
</dbReference>
<dbReference type="PROSITE" id="PS00071">
    <property type="entry name" value="GAPDH"/>
    <property type="match status" value="1"/>
</dbReference>
<evidence type="ECO:0000255" key="1">
    <source>
        <dbReference type="HAMAP-Rule" id="MF_00559"/>
    </source>
</evidence>
<evidence type="ECO:0000256" key="2">
    <source>
        <dbReference type="SAM" id="MobiDB-lite"/>
    </source>
</evidence>
<keyword id="KW-0963">Cytoplasm</keyword>
<keyword id="KW-0324">Glycolysis</keyword>
<keyword id="KW-0520">NAD</keyword>
<keyword id="KW-0521">NADP</keyword>
<keyword id="KW-0560">Oxidoreductase</keyword>
<accession>A5ULT9</accession>
<sequence>MKSVAINGYGTIGKRVADAVAAQDDMKVIGVSKTRPNYESRTAVEEKGYDLYIGIPERADQFKEAGIEIAGTVEDMIQEADVVVDCTPGTIGPQNLEMYKKAGVKAIYQGGEDHELTGLSFNAISNYDDSYGKDYTRVVSCNTTGLTRTLSTIDPIADIKKVRAVMVRRGSDPSEVKKGPINSIVPNPPKVPSHHGPDVKTVMEGIDVTTMALLVPTTLMHQHNIMVEINNEVETQEIIDALEKRSRVLVVDASEGLGSTAELMEYAKELGRNRNDLYEIPVWRESINVVGNELYYMQAVHQESDVVPENIDAIRALLEMESDNEKSIAKTNKAMGIL</sequence>
<gene>
    <name evidence="1" type="primary">gap</name>
    <name type="ordered locus">Msm_0962</name>
</gene>
<feature type="chain" id="PRO_0000300971" description="Glyceraldehyde-3-phosphate dehydrogenase">
    <location>
        <begin position="1"/>
        <end position="338"/>
    </location>
</feature>
<feature type="region of interest" description="Disordered" evidence="2">
    <location>
        <begin position="170"/>
        <end position="195"/>
    </location>
</feature>
<feature type="active site" description="Nucleophile" evidence="1">
    <location>
        <position position="141"/>
    </location>
</feature>
<feature type="binding site" evidence="1">
    <location>
        <begin position="11"/>
        <end position="12"/>
    </location>
    <ligand>
        <name>NAD(+)</name>
        <dbReference type="ChEBI" id="CHEBI:57540"/>
    </ligand>
</feature>
<feature type="binding site" evidence="1">
    <location>
        <position position="111"/>
    </location>
    <ligand>
        <name>NAD(+)</name>
        <dbReference type="ChEBI" id="CHEBI:57540"/>
    </ligand>
</feature>
<feature type="binding site" evidence="1">
    <location>
        <begin position="140"/>
        <end position="142"/>
    </location>
    <ligand>
        <name>D-glyceraldehyde 3-phosphate</name>
        <dbReference type="ChEBI" id="CHEBI:59776"/>
    </ligand>
</feature>
<feature type="binding site" evidence="1">
    <location>
        <position position="169"/>
    </location>
    <ligand>
        <name>NAD(+)</name>
        <dbReference type="ChEBI" id="CHEBI:57540"/>
    </ligand>
</feature>
<feature type="binding site" evidence="1">
    <location>
        <begin position="195"/>
        <end position="196"/>
    </location>
    <ligand>
        <name>D-glyceraldehyde 3-phosphate</name>
        <dbReference type="ChEBI" id="CHEBI:59776"/>
    </ligand>
</feature>
<feature type="binding site" evidence="1">
    <location>
        <position position="302"/>
    </location>
    <ligand>
        <name>NAD(+)</name>
        <dbReference type="ChEBI" id="CHEBI:57540"/>
    </ligand>
</feature>
<name>G3P_METS3</name>
<organism>
    <name type="scientific">Methanobrevibacter smithii (strain ATCC 35061 / DSM 861 / OCM 144 / PS)</name>
    <dbReference type="NCBI Taxonomy" id="420247"/>
    <lineage>
        <taxon>Archaea</taxon>
        <taxon>Methanobacteriati</taxon>
        <taxon>Methanobacteriota</taxon>
        <taxon>Methanomada group</taxon>
        <taxon>Methanobacteria</taxon>
        <taxon>Methanobacteriales</taxon>
        <taxon>Methanobacteriaceae</taxon>
        <taxon>Methanobrevibacter</taxon>
    </lineage>
</organism>
<reference key="1">
    <citation type="journal article" date="2007" name="Proc. Natl. Acad. Sci. U.S.A.">
        <title>Genomic and metabolic adaptations of Methanobrevibacter smithii to the human gut.</title>
        <authorList>
            <person name="Samuel B.S."/>
            <person name="Hansen E.E."/>
            <person name="Manchester J.K."/>
            <person name="Coutinho P.M."/>
            <person name="Henrissat B."/>
            <person name="Fulton R."/>
            <person name="Latreille P."/>
            <person name="Kim K."/>
            <person name="Wilson R.K."/>
            <person name="Gordon J.I."/>
        </authorList>
    </citation>
    <scope>NUCLEOTIDE SEQUENCE [LARGE SCALE GENOMIC DNA]</scope>
    <source>
        <strain>ATCC 35061 / DSM 861 / OCM 144 / PS</strain>
    </source>
</reference>
<protein>
    <recommendedName>
        <fullName evidence="1">Glyceraldehyde-3-phosphate dehydrogenase</fullName>
        <shortName evidence="1">GAPDH</shortName>
        <ecNumber evidence="1">1.2.1.59</ecNumber>
    </recommendedName>
    <alternativeName>
        <fullName evidence="1">NAD(P)-dependent glyceraldehyde-3-phosphate dehydrogenase</fullName>
    </alternativeName>
</protein>